<proteinExistence type="inferred from homology"/>
<comment type="function">
    <text evidence="1">Functions in the biosynthesis of branched-chain amino acids. Catalyzes the dehydration of (2R,3R)-2,3-dihydroxy-3-methylpentanoate (2,3-dihydroxy-3-methylvalerate) into 2-oxo-3-methylpentanoate (2-oxo-3-methylvalerate) and of (2R)-2,3-dihydroxy-3-methylbutanoate (2,3-dihydroxyisovalerate) into 2-oxo-3-methylbutanoate (2-oxoisovalerate), the penultimate precursor to L-isoleucine and L-valine, respectively.</text>
</comment>
<comment type="catalytic activity">
    <reaction evidence="1">
        <text>(2R)-2,3-dihydroxy-3-methylbutanoate = 3-methyl-2-oxobutanoate + H2O</text>
        <dbReference type="Rhea" id="RHEA:24809"/>
        <dbReference type="ChEBI" id="CHEBI:11851"/>
        <dbReference type="ChEBI" id="CHEBI:15377"/>
        <dbReference type="ChEBI" id="CHEBI:49072"/>
        <dbReference type="EC" id="4.2.1.9"/>
    </reaction>
    <physiologicalReaction direction="left-to-right" evidence="1">
        <dbReference type="Rhea" id="RHEA:24810"/>
    </physiologicalReaction>
</comment>
<comment type="catalytic activity">
    <reaction evidence="1">
        <text>(2R,3R)-2,3-dihydroxy-3-methylpentanoate = (S)-3-methyl-2-oxopentanoate + H2O</text>
        <dbReference type="Rhea" id="RHEA:27694"/>
        <dbReference type="ChEBI" id="CHEBI:15377"/>
        <dbReference type="ChEBI" id="CHEBI:35146"/>
        <dbReference type="ChEBI" id="CHEBI:49258"/>
        <dbReference type="EC" id="4.2.1.9"/>
    </reaction>
    <physiologicalReaction direction="left-to-right" evidence="1">
        <dbReference type="Rhea" id="RHEA:27695"/>
    </physiologicalReaction>
</comment>
<comment type="cofactor">
    <cofactor evidence="1">
        <name>[2Fe-2S] cluster</name>
        <dbReference type="ChEBI" id="CHEBI:190135"/>
    </cofactor>
    <text evidence="1">Binds 1 [2Fe-2S] cluster per subunit. This cluster acts as a Lewis acid cofactor.</text>
</comment>
<comment type="cofactor">
    <cofactor evidence="1">
        <name>Mg(2+)</name>
        <dbReference type="ChEBI" id="CHEBI:18420"/>
    </cofactor>
</comment>
<comment type="pathway">
    <text evidence="1">Amino-acid biosynthesis; L-isoleucine biosynthesis; L-isoleucine from 2-oxobutanoate: step 3/4.</text>
</comment>
<comment type="pathway">
    <text evidence="1">Amino-acid biosynthesis; L-valine biosynthesis; L-valine from pyruvate: step 3/4.</text>
</comment>
<comment type="subunit">
    <text evidence="1">Homodimer.</text>
</comment>
<comment type="similarity">
    <text evidence="1">Belongs to the IlvD/Edd family.</text>
</comment>
<name>ILVD_NOSS1</name>
<gene>
    <name evidence="1" type="primary">ilvD</name>
    <name type="ordered locus">alr2771</name>
</gene>
<evidence type="ECO:0000255" key="1">
    <source>
        <dbReference type="HAMAP-Rule" id="MF_00012"/>
    </source>
</evidence>
<organism>
    <name type="scientific">Nostoc sp. (strain PCC 7120 / SAG 25.82 / UTEX 2576)</name>
    <dbReference type="NCBI Taxonomy" id="103690"/>
    <lineage>
        <taxon>Bacteria</taxon>
        <taxon>Bacillati</taxon>
        <taxon>Cyanobacteriota</taxon>
        <taxon>Cyanophyceae</taxon>
        <taxon>Nostocales</taxon>
        <taxon>Nostocaceae</taxon>
        <taxon>Nostoc</taxon>
    </lineage>
</organism>
<sequence>MSENFRSKAITQGVQRSPNRAMLRAVGFQDADFTKAIVGVANGYSTITPCNMGINQLAQRAEAGINTAGAKPQIFGTITISDGISMGTEGMKYSLVSREVIADSIETVCNGQSLDGVIAIGGCDKNMPGAMIAIARINIPAIFVYGGTIKPGHYNGKDLTVVSSFEAVGEYSAGKIDENELLAVERNACPGAGSCGGMYTANTMSSAFEALGMSLPYSSTMAAEDDEKADSTEESAKVLVEAIRHQLLPRQIITRKSIENAISVIMAVGGSTNAVLHFLAIARAAGVELNLDDFETIRGRVPVLCDLKPSGRYVATDLHKAGGIPQVMKMLLVHGLLHGDCMTITGKTIAEVLADIPEEPSPNQDVIRPWNNPMYAQGHLAILKGNLATEGAVAKITGVKNPVITGPAKVFESEEDCLDAILAGKIKAGDVIVIRYEGPKGGPGMREMLAPTSAIIGAGLGDSVGLITDGRFSGGTYGMVVGHVAPEAAVGGAIALVQEGDSITIDAHARSLQLNISDEELTRRRANWQPRPPRYTTGILAKYAKLVASSSVGAVTDLDLFNK</sequence>
<accession>Q8YTE6</accession>
<feature type="chain" id="PRO_0000103425" description="Dihydroxy-acid dehydratase">
    <location>
        <begin position="1"/>
        <end position="563"/>
    </location>
</feature>
<feature type="active site" description="Proton acceptor" evidence="1">
    <location>
        <position position="473"/>
    </location>
</feature>
<feature type="binding site" evidence="1">
    <location>
        <position position="50"/>
    </location>
    <ligand>
        <name>[2Fe-2S] cluster</name>
        <dbReference type="ChEBI" id="CHEBI:190135"/>
    </ligand>
</feature>
<feature type="binding site" evidence="1">
    <location>
        <position position="82"/>
    </location>
    <ligand>
        <name>Mg(2+)</name>
        <dbReference type="ChEBI" id="CHEBI:18420"/>
    </ligand>
</feature>
<feature type="binding site" evidence="1">
    <location>
        <position position="123"/>
    </location>
    <ligand>
        <name>[2Fe-2S] cluster</name>
        <dbReference type="ChEBI" id="CHEBI:190135"/>
    </ligand>
</feature>
<feature type="binding site" evidence="1">
    <location>
        <position position="124"/>
    </location>
    <ligand>
        <name>Mg(2+)</name>
        <dbReference type="ChEBI" id="CHEBI:18420"/>
    </ligand>
</feature>
<feature type="binding site" description="via carbamate group" evidence="1">
    <location>
        <position position="125"/>
    </location>
    <ligand>
        <name>Mg(2+)</name>
        <dbReference type="ChEBI" id="CHEBI:18420"/>
    </ligand>
</feature>
<feature type="binding site" evidence="1">
    <location>
        <position position="195"/>
    </location>
    <ligand>
        <name>[2Fe-2S] cluster</name>
        <dbReference type="ChEBI" id="CHEBI:190135"/>
    </ligand>
</feature>
<feature type="binding site" evidence="1">
    <location>
        <position position="447"/>
    </location>
    <ligand>
        <name>Mg(2+)</name>
        <dbReference type="ChEBI" id="CHEBI:18420"/>
    </ligand>
</feature>
<feature type="modified residue" description="N6-carboxylysine" evidence="1">
    <location>
        <position position="125"/>
    </location>
</feature>
<protein>
    <recommendedName>
        <fullName evidence="1">Dihydroxy-acid dehydratase</fullName>
        <shortName evidence="1">DAD</shortName>
        <ecNumber evidence="1">4.2.1.9</ecNumber>
    </recommendedName>
</protein>
<keyword id="KW-0001">2Fe-2S</keyword>
<keyword id="KW-0028">Amino-acid biosynthesis</keyword>
<keyword id="KW-0100">Branched-chain amino acid biosynthesis</keyword>
<keyword id="KW-0408">Iron</keyword>
<keyword id="KW-0411">Iron-sulfur</keyword>
<keyword id="KW-0456">Lyase</keyword>
<keyword id="KW-0460">Magnesium</keyword>
<keyword id="KW-0479">Metal-binding</keyword>
<keyword id="KW-1185">Reference proteome</keyword>
<dbReference type="EC" id="4.2.1.9" evidence="1"/>
<dbReference type="EMBL" id="BA000019">
    <property type="protein sequence ID" value="BAB74470.1"/>
    <property type="molecule type" value="Genomic_DNA"/>
</dbReference>
<dbReference type="PIR" id="AD2152">
    <property type="entry name" value="AD2152"/>
</dbReference>
<dbReference type="RefSeq" id="WP_010996924.1">
    <property type="nucleotide sequence ID" value="NZ_RSCN01000030.1"/>
</dbReference>
<dbReference type="SMR" id="Q8YTE6"/>
<dbReference type="STRING" id="103690.gene:10494805"/>
<dbReference type="KEGG" id="ana:alr2771"/>
<dbReference type="eggNOG" id="COG0129">
    <property type="taxonomic scope" value="Bacteria"/>
</dbReference>
<dbReference type="OrthoDB" id="9807077at2"/>
<dbReference type="UniPathway" id="UPA00047">
    <property type="reaction ID" value="UER00057"/>
</dbReference>
<dbReference type="UniPathway" id="UPA00049">
    <property type="reaction ID" value="UER00061"/>
</dbReference>
<dbReference type="Proteomes" id="UP000002483">
    <property type="component" value="Chromosome"/>
</dbReference>
<dbReference type="GO" id="GO:0051537">
    <property type="term" value="F:2 iron, 2 sulfur cluster binding"/>
    <property type="evidence" value="ECO:0007669"/>
    <property type="project" value="UniProtKB-UniRule"/>
</dbReference>
<dbReference type="GO" id="GO:0004160">
    <property type="term" value="F:dihydroxy-acid dehydratase activity"/>
    <property type="evidence" value="ECO:0007669"/>
    <property type="project" value="UniProtKB-UniRule"/>
</dbReference>
<dbReference type="GO" id="GO:0000287">
    <property type="term" value="F:magnesium ion binding"/>
    <property type="evidence" value="ECO:0007669"/>
    <property type="project" value="UniProtKB-UniRule"/>
</dbReference>
<dbReference type="GO" id="GO:0009097">
    <property type="term" value="P:isoleucine biosynthetic process"/>
    <property type="evidence" value="ECO:0007669"/>
    <property type="project" value="UniProtKB-UniRule"/>
</dbReference>
<dbReference type="GO" id="GO:0009099">
    <property type="term" value="P:L-valine biosynthetic process"/>
    <property type="evidence" value="ECO:0007669"/>
    <property type="project" value="UniProtKB-UniRule"/>
</dbReference>
<dbReference type="FunFam" id="3.50.30.80:FF:000001">
    <property type="entry name" value="Dihydroxy-acid dehydratase"/>
    <property type="match status" value="1"/>
</dbReference>
<dbReference type="Gene3D" id="3.50.30.80">
    <property type="entry name" value="IlvD/EDD C-terminal domain-like"/>
    <property type="match status" value="1"/>
</dbReference>
<dbReference type="HAMAP" id="MF_00012">
    <property type="entry name" value="IlvD"/>
    <property type="match status" value="1"/>
</dbReference>
<dbReference type="InterPro" id="IPR050165">
    <property type="entry name" value="DHAD_IlvD/Edd"/>
</dbReference>
<dbReference type="InterPro" id="IPR042096">
    <property type="entry name" value="Dihydro-acid_dehy_C"/>
</dbReference>
<dbReference type="InterPro" id="IPR004404">
    <property type="entry name" value="DihydroxyA_deHydtase"/>
</dbReference>
<dbReference type="InterPro" id="IPR020558">
    <property type="entry name" value="DiOHA_6PGluconate_deHydtase_CS"/>
</dbReference>
<dbReference type="InterPro" id="IPR056740">
    <property type="entry name" value="ILV_EDD_C"/>
</dbReference>
<dbReference type="InterPro" id="IPR000581">
    <property type="entry name" value="ILV_EDD_N"/>
</dbReference>
<dbReference type="InterPro" id="IPR037237">
    <property type="entry name" value="IlvD/EDD_N"/>
</dbReference>
<dbReference type="NCBIfam" id="TIGR00110">
    <property type="entry name" value="ilvD"/>
    <property type="match status" value="1"/>
</dbReference>
<dbReference type="NCBIfam" id="NF002068">
    <property type="entry name" value="PRK00911.1"/>
    <property type="match status" value="1"/>
</dbReference>
<dbReference type="PANTHER" id="PTHR21000">
    <property type="entry name" value="DIHYDROXY-ACID DEHYDRATASE DAD"/>
    <property type="match status" value="1"/>
</dbReference>
<dbReference type="PANTHER" id="PTHR21000:SF5">
    <property type="entry name" value="DIHYDROXY-ACID DEHYDRATASE, MITOCHONDRIAL"/>
    <property type="match status" value="1"/>
</dbReference>
<dbReference type="Pfam" id="PF24877">
    <property type="entry name" value="ILV_EDD_C"/>
    <property type="match status" value="1"/>
</dbReference>
<dbReference type="Pfam" id="PF00920">
    <property type="entry name" value="ILVD_EDD_N"/>
    <property type="match status" value="1"/>
</dbReference>
<dbReference type="SUPFAM" id="SSF143975">
    <property type="entry name" value="IlvD/EDD N-terminal domain-like"/>
    <property type="match status" value="1"/>
</dbReference>
<dbReference type="SUPFAM" id="SSF52016">
    <property type="entry name" value="LeuD/IlvD-like"/>
    <property type="match status" value="1"/>
</dbReference>
<dbReference type="PROSITE" id="PS00886">
    <property type="entry name" value="ILVD_EDD_1"/>
    <property type="match status" value="1"/>
</dbReference>
<dbReference type="PROSITE" id="PS00887">
    <property type="entry name" value="ILVD_EDD_2"/>
    <property type="match status" value="1"/>
</dbReference>
<reference key="1">
    <citation type="journal article" date="2001" name="DNA Res.">
        <title>Complete genomic sequence of the filamentous nitrogen-fixing cyanobacterium Anabaena sp. strain PCC 7120.</title>
        <authorList>
            <person name="Kaneko T."/>
            <person name="Nakamura Y."/>
            <person name="Wolk C.P."/>
            <person name="Kuritz T."/>
            <person name="Sasamoto S."/>
            <person name="Watanabe A."/>
            <person name="Iriguchi M."/>
            <person name="Ishikawa A."/>
            <person name="Kawashima K."/>
            <person name="Kimura T."/>
            <person name="Kishida Y."/>
            <person name="Kohara M."/>
            <person name="Matsumoto M."/>
            <person name="Matsuno A."/>
            <person name="Muraki A."/>
            <person name="Nakazaki N."/>
            <person name="Shimpo S."/>
            <person name="Sugimoto M."/>
            <person name="Takazawa M."/>
            <person name="Yamada M."/>
            <person name="Yasuda M."/>
            <person name="Tabata S."/>
        </authorList>
    </citation>
    <scope>NUCLEOTIDE SEQUENCE [LARGE SCALE GENOMIC DNA]</scope>
    <source>
        <strain>PCC 7120 / SAG 25.82 / UTEX 2576</strain>
    </source>
</reference>